<accession>Q8NBS3</accession>
<accession>B4DKC8</accession>
<accession>B4DKX9</accession>
<accession>G3V1M3</accession>
<accession>Q2TB62</accession>
<accession>Q2TB63</accession>
<accession>Q9BXF4</accession>
<accession>Q9NTW9</accession>
<sequence>MAAATRRVFHLQPCENSPTMSQNGYFEDSSYYKCDTDDTFEAREEILGDEAFDTANSSIVSGESIRFFVNVNLEMQATNTENEATSGGCVLLHTSRKYLKLKNFKEEIRAHRDLDGFLAQASIVLNETATSLDNVLRTMLRRFARDPDNNEPNCNLDLLMAMLFTDAGAPMRGKVHLLSDTIQGVTATVTGVRYQQSWLCIICTMKALQKRHVCISRLVRPQNWGENSCEVRFVILVLAPPKMKSTKTAMEVARTFATMFSDIAFRQKLLETRTEEEFKEALVHQRQLLTMVSHGPVAPRTKERSTVSLPAHRHPEPPKCKDFVPFGKGIREDIARRFPLYPLDFTDGIIGKNKAVGKYITTTLFLYFACLLPTIAFGSLNDENTDGAIDVQKTIAGQSIGGLLYALFSGQPLVILLTTAPLALYIQVIRVICDDYDLDFNSFYAWTGLWNSFFLALYAFFNLSLVMSLFKRSTEEIIALFISITFVLDAVKGTVKIFWKYYYGHYLDDYHTKRTSSLVSLSGLGASLNASLHTALNASFLASPTELPSATHSGQATAVLSLLIMLGTLWLGYTLYQFKKSPYLHPCVREILSDCALPIAVLAFSLISSHGFREIEMSKFRYNPSESPFAMAQIQSLSLRAVSGAMGLGFLLSMLFFIEQNLVAALVNAPENRLVKGTAYHWDLLLLAIINTGLSLFGLPWIHAAYPHSPLHVRALALVEERVENGHIYDTIVNVKETRLTSLGASVLVGLSLLLLPVPLQWIPKPVLYGLFLYIALTSLDGNQLVQRVALLLKEQTAYPPTHYIRRVPQRKIHYFTGLQVLQLLLLCAFGMSSLPYMKMIFPLIMIAMIPIRYILLPRIIEAKYLDVMDAEHRP</sequence>
<dbReference type="EMBL" id="AF336127">
    <property type="protein sequence ID" value="AAK16734.1"/>
    <property type="molecule type" value="mRNA"/>
</dbReference>
<dbReference type="EMBL" id="AK075303">
    <property type="protein sequence ID" value="BAC11536.1"/>
    <property type="status" value="ALT_INIT"/>
    <property type="molecule type" value="mRNA"/>
</dbReference>
<dbReference type="EMBL" id="AK296508">
    <property type="protein sequence ID" value="BAG59140.1"/>
    <property type="molecule type" value="mRNA"/>
</dbReference>
<dbReference type="EMBL" id="AK296760">
    <property type="protein sequence ID" value="BAG59341.1"/>
    <property type="molecule type" value="mRNA"/>
</dbReference>
<dbReference type="EMBL" id="AL109976">
    <property type="status" value="NOT_ANNOTATED_CDS"/>
    <property type="molecule type" value="Genomic_DNA"/>
</dbReference>
<dbReference type="EMBL" id="CH471133">
    <property type="protein sequence ID" value="EAX10536.1"/>
    <property type="molecule type" value="Genomic_DNA"/>
</dbReference>
<dbReference type="EMBL" id="BC110540">
    <property type="protein sequence ID" value="AAI10541.1"/>
    <property type="molecule type" value="mRNA"/>
</dbReference>
<dbReference type="EMBL" id="BC110541">
    <property type="protein sequence ID" value="AAI10542.1"/>
    <property type="molecule type" value="mRNA"/>
</dbReference>
<dbReference type="CCDS" id="CCDS13052.1">
    <molecule id="Q8NBS3-1"/>
</dbReference>
<dbReference type="CCDS" id="CCDS54445.1">
    <molecule id="Q8NBS3-4"/>
</dbReference>
<dbReference type="CCDS" id="CCDS54446.1">
    <molecule id="Q8NBS3-3"/>
</dbReference>
<dbReference type="RefSeq" id="NP_001167560.1">
    <molecule id="Q8NBS3-3"/>
    <property type="nucleotide sequence ID" value="NM_001174089.2"/>
</dbReference>
<dbReference type="RefSeq" id="NP_001167561.1">
    <molecule id="Q8NBS3-4"/>
    <property type="nucleotide sequence ID" value="NM_001174090.2"/>
</dbReference>
<dbReference type="RefSeq" id="NP_001387206.1">
    <molecule id="Q8NBS3-5"/>
    <property type="nucleotide sequence ID" value="NM_001400277.1"/>
</dbReference>
<dbReference type="RefSeq" id="NP_001387207.1">
    <molecule id="Q8NBS3-5"/>
    <property type="nucleotide sequence ID" value="NM_001400278.1"/>
</dbReference>
<dbReference type="RefSeq" id="NP_001387208.1">
    <molecule id="Q8NBS3-5"/>
    <property type="nucleotide sequence ID" value="NM_001400279.1"/>
</dbReference>
<dbReference type="RefSeq" id="NP_114423.1">
    <molecule id="Q8NBS3-1"/>
    <property type="nucleotide sequence ID" value="NM_032034.4"/>
</dbReference>
<dbReference type="RefSeq" id="XP_005260914.1">
    <property type="nucleotide sequence ID" value="XM_005260857.1"/>
</dbReference>
<dbReference type="RefSeq" id="XP_011527686.1">
    <property type="nucleotide sequence ID" value="XM_011529384.1"/>
</dbReference>
<dbReference type="RefSeq" id="XP_011527687.1">
    <property type="nucleotide sequence ID" value="XM_011529385.1"/>
</dbReference>
<dbReference type="RefSeq" id="XP_016883583.1">
    <molecule id="Q8NBS3-5"/>
    <property type="nucleotide sequence ID" value="XM_017028094.2"/>
</dbReference>
<dbReference type="RefSeq" id="XP_016883585.1">
    <molecule id="Q8NBS3-5"/>
    <property type="nucleotide sequence ID" value="XM_017028096.2"/>
</dbReference>
<dbReference type="RefSeq" id="XP_047296496.1">
    <molecule id="Q8NBS3-1"/>
    <property type="nucleotide sequence ID" value="XM_047440540.1"/>
</dbReference>
<dbReference type="RefSeq" id="XP_054180085.1">
    <molecule id="Q8NBS3-1"/>
    <property type="nucleotide sequence ID" value="XM_054324110.1"/>
</dbReference>
<dbReference type="RefSeq" id="XP_054180087.1">
    <molecule id="Q8NBS3-5"/>
    <property type="nucleotide sequence ID" value="XM_054324112.1"/>
</dbReference>
<dbReference type="RefSeq" id="XP_054180088.1">
    <molecule id="Q8NBS3-5"/>
    <property type="nucleotide sequence ID" value="XM_054324113.1"/>
</dbReference>
<dbReference type="PDB" id="7X1G">
    <property type="method" value="EM"/>
    <property type="resolution" value="2.94 A"/>
    <property type="chains" value="A/B=15-875"/>
</dbReference>
<dbReference type="PDB" id="7X1H">
    <property type="method" value="EM"/>
    <property type="resolution" value="2.96 A"/>
    <property type="chains" value="A/B=15-875"/>
</dbReference>
<dbReference type="PDB" id="7X1I">
    <property type="method" value="EM"/>
    <property type="resolution" value="2.94 A"/>
    <property type="chains" value="A/B=15-875"/>
</dbReference>
<dbReference type="PDB" id="7X1J">
    <property type="method" value="EM"/>
    <property type="resolution" value="2.84 A"/>
    <property type="chains" value="A/B=15-875"/>
</dbReference>
<dbReference type="PDBsum" id="7X1G"/>
<dbReference type="PDBsum" id="7X1H"/>
<dbReference type="PDBsum" id="7X1I"/>
<dbReference type="PDBsum" id="7X1J"/>
<dbReference type="EMDB" id="EMD-32940"/>
<dbReference type="EMDB" id="EMD-32941"/>
<dbReference type="EMDB" id="EMD-32942"/>
<dbReference type="EMDB" id="EMD-32943"/>
<dbReference type="SMR" id="Q8NBS3"/>
<dbReference type="BioGRID" id="123832">
    <property type="interactions" value="5"/>
</dbReference>
<dbReference type="FunCoup" id="Q8NBS3">
    <property type="interactions" value="25"/>
</dbReference>
<dbReference type="IntAct" id="Q8NBS3">
    <property type="interactions" value="1"/>
</dbReference>
<dbReference type="STRING" id="9606.ENSP00000369399"/>
<dbReference type="TCDB" id="2.A.31.1.5">
    <property type="family name" value="the anion exchanger (ae) family"/>
</dbReference>
<dbReference type="GlyCosmos" id="Q8NBS3">
    <property type="glycosylation" value="2 sites, No reported glycans"/>
</dbReference>
<dbReference type="GlyGen" id="Q8NBS3">
    <property type="glycosylation" value="2 sites"/>
</dbReference>
<dbReference type="iPTMnet" id="Q8NBS3"/>
<dbReference type="PhosphoSitePlus" id="Q8NBS3"/>
<dbReference type="SwissPalm" id="Q8NBS3"/>
<dbReference type="BioMuta" id="SLC4A11"/>
<dbReference type="DMDM" id="29611858"/>
<dbReference type="jPOST" id="Q8NBS3"/>
<dbReference type="MassIVE" id="Q8NBS3"/>
<dbReference type="PaxDb" id="9606-ENSP00000369399"/>
<dbReference type="PeptideAtlas" id="Q8NBS3"/>
<dbReference type="ProteomicsDB" id="32378"/>
<dbReference type="ProteomicsDB" id="72815">
    <molecule id="Q8NBS3-1"/>
</dbReference>
<dbReference type="ProteomicsDB" id="72816">
    <molecule id="Q8NBS3-2"/>
</dbReference>
<dbReference type="Antibodypedia" id="7351">
    <property type="antibodies" value="107 antibodies from 26 providers"/>
</dbReference>
<dbReference type="DNASU" id="83959"/>
<dbReference type="Ensembl" id="ENST00000380056.7">
    <molecule id="Q8NBS3-1"/>
    <property type="protein sequence ID" value="ENSP00000369396.3"/>
    <property type="gene ID" value="ENSG00000088836.14"/>
</dbReference>
<dbReference type="Ensembl" id="ENST00000380059.7">
    <molecule id="Q8NBS3-4"/>
    <property type="protein sequence ID" value="ENSP00000369399.3"/>
    <property type="gene ID" value="ENSG00000088836.14"/>
</dbReference>
<dbReference type="Ensembl" id="ENST00000642402.1">
    <molecule id="Q8NBS3-3"/>
    <property type="protein sequence ID" value="ENSP00000493503.1"/>
    <property type="gene ID" value="ENSG00000088836.14"/>
</dbReference>
<dbReference type="GeneID" id="83959"/>
<dbReference type="KEGG" id="hsa:83959"/>
<dbReference type="MANE-Select" id="ENST00000642402.1">
    <property type="protein sequence ID" value="ENSP00000493503.1"/>
    <property type="RefSeq nucleotide sequence ID" value="NM_001174089.2"/>
    <property type="RefSeq protein sequence ID" value="NP_001167560.1"/>
</dbReference>
<dbReference type="UCSC" id="uc002wig.3">
    <molecule id="Q8NBS3-3"/>
    <property type="organism name" value="human"/>
</dbReference>
<dbReference type="AGR" id="HGNC:16438"/>
<dbReference type="CTD" id="83959"/>
<dbReference type="DisGeNET" id="83959"/>
<dbReference type="GeneCards" id="SLC4A11"/>
<dbReference type="HGNC" id="HGNC:16438">
    <property type="gene designation" value="SLC4A11"/>
</dbReference>
<dbReference type="HPA" id="ENSG00000088836">
    <property type="expression patterns" value="Tissue enhanced (kidney, salivary gland, thyroid gland)"/>
</dbReference>
<dbReference type="MalaCards" id="SLC4A11"/>
<dbReference type="MIM" id="217400">
    <property type="type" value="phenotype"/>
</dbReference>
<dbReference type="MIM" id="217700">
    <property type="type" value="phenotype"/>
</dbReference>
<dbReference type="MIM" id="610206">
    <property type="type" value="gene"/>
</dbReference>
<dbReference type="MIM" id="613268">
    <property type="type" value="phenotype"/>
</dbReference>
<dbReference type="neXtProt" id="NX_Q8NBS3"/>
<dbReference type="OpenTargets" id="ENSG00000088836"/>
<dbReference type="Orphanet" id="293603">
    <property type="disease" value="Congenital hereditary endothelial dystrophy type II"/>
</dbReference>
<dbReference type="Orphanet" id="1490">
    <property type="disease" value="Corneal dystrophy-perceptive deafness syndrome"/>
</dbReference>
<dbReference type="Orphanet" id="98974">
    <property type="disease" value="Fuchs endothelial corneal dystrophy"/>
</dbReference>
<dbReference type="PharmGKB" id="PA38139"/>
<dbReference type="VEuPathDB" id="HostDB:ENSG00000088836"/>
<dbReference type="eggNOG" id="KOG1172">
    <property type="taxonomic scope" value="Eukaryota"/>
</dbReference>
<dbReference type="GeneTree" id="ENSGT00940000154894"/>
<dbReference type="HOGENOM" id="CLU_002289_6_0_1"/>
<dbReference type="InParanoid" id="Q8NBS3"/>
<dbReference type="OMA" id="AIFHWIV"/>
<dbReference type="OrthoDB" id="1735926at2759"/>
<dbReference type="PAN-GO" id="Q8NBS3">
    <property type="GO annotations" value="5 GO annotations based on evolutionary models"/>
</dbReference>
<dbReference type="PhylomeDB" id="Q8NBS3"/>
<dbReference type="TreeFam" id="TF313630"/>
<dbReference type="PathwayCommons" id="Q8NBS3"/>
<dbReference type="SignaLink" id="Q8NBS3"/>
<dbReference type="BioGRID-ORCS" id="83959">
    <property type="hits" value="22 hits in 1154 CRISPR screens"/>
</dbReference>
<dbReference type="ChiTaRS" id="SLC4A11">
    <property type="organism name" value="human"/>
</dbReference>
<dbReference type="GeneWiki" id="SLC4A11"/>
<dbReference type="GenomeRNAi" id="83959"/>
<dbReference type="Pharos" id="Q8NBS3">
    <property type="development level" value="Tbio"/>
</dbReference>
<dbReference type="PRO" id="PR:Q8NBS3"/>
<dbReference type="Proteomes" id="UP000005640">
    <property type="component" value="Chromosome 20"/>
</dbReference>
<dbReference type="RNAct" id="Q8NBS3">
    <property type="molecule type" value="protein"/>
</dbReference>
<dbReference type="Bgee" id="ENSG00000088836">
    <property type="expression patterns" value="Expressed in nasal cavity epithelium and 138 other cell types or tissues"/>
</dbReference>
<dbReference type="ExpressionAtlas" id="Q8NBS3">
    <property type="expression patterns" value="baseline and differential"/>
</dbReference>
<dbReference type="GO" id="GO:0016324">
    <property type="term" value="C:apical plasma membrane"/>
    <property type="evidence" value="ECO:0000314"/>
    <property type="project" value="ARUK-UCL"/>
</dbReference>
<dbReference type="GO" id="GO:0016323">
    <property type="term" value="C:basolateral plasma membrane"/>
    <property type="evidence" value="ECO:0000314"/>
    <property type="project" value="UniProtKB"/>
</dbReference>
<dbReference type="GO" id="GO:0005886">
    <property type="term" value="C:plasma membrane"/>
    <property type="evidence" value="ECO:0000250"/>
    <property type="project" value="ARUK-UCL"/>
</dbReference>
<dbReference type="GO" id="GO:0012506">
    <property type="term" value="C:vesicle membrane"/>
    <property type="evidence" value="ECO:0000250"/>
    <property type="project" value="ARUK-UCL"/>
</dbReference>
<dbReference type="GO" id="GO:0046715">
    <property type="term" value="F:active borate transmembrane transporter activity"/>
    <property type="evidence" value="ECO:0000314"/>
    <property type="project" value="HGNC-UCL"/>
</dbReference>
<dbReference type="GO" id="GO:0015106">
    <property type="term" value="F:bicarbonate transmembrane transporter activity"/>
    <property type="evidence" value="ECO:0000314"/>
    <property type="project" value="HGNC-UCL"/>
</dbReference>
<dbReference type="GO" id="GO:0046983">
    <property type="term" value="F:protein dimerization activity"/>
    <property type="evidence" value="ECO:0000314"/>
    <property type="project" value="UniProtKB"/>
</dbReference>
<dbReference type="GO" id="GO:0015252">
    <property type="term" value="F:proton channel activity"/>
    <property type="evidence" value="ECO:0000314"/>
    <property type="project" value="HGNC-UCL"/>
</dbReference>
<dbReference type="GO" id="GO:0015078">
    <property type="term" value="F:proton transmembrane transporter activity"/>
    <property type="evidence" value="ECO:0000314"/>
    <property type="project" value="UniProtKB"/>
</dbReference>
<dbReference type="GO" id="GO:0005272">
    <property type="term" value="F:sodium channel activity"/>
    <property type="evidence" value="ECO:0000314"/>
    <property type="project" value="HGNC-UCL"/>
</dbReference>
<dbReference type="GO" id="GO:0005452">
    <property type="term" value="F:solute:inorganic anion antiporter activity"/>
    <property type="evidence" value="ECO:0007669"/>
    <property type="project" value="InterPro"/>
</dbReference>
<dbReference type="GO" id="GO:0015293">
    <property type="term" value="F:symporter activity"/>
    <property type="evidence" value="ECO:0007669"/>
    <property type="project" value="UniProtKB-KW"/>
</dbReference>
<dbReference type="GO" id="GO:0005372">
    <property type="term" value="F:water transmembrane transporter activity"/>
    <property type="evidence" value="ECO:0000314"/>
    <property type="project" value="UniProtKB"/>
</dbReference>
<dbReference type="GO" id="GO:0015701">
    <property type="term" value="P:bicarbonate transport"/>
    <property type="evidence" value="ECO:0000314"/>
    <property type="project" value="HGNC-UCL"/>
</dbReference>
<dbReference type="GO" id="GO:0046713">
    <property type="term" value="P:borate transport"/>
    <property type="evidence" value="ECO:0000314"/>
    <property type="project" value="HGNC-UCL"/>
</dbReference>
<dbReference type="GO" id="GO:0071476">
    <property type="term" value="P:cellular hypotonic response"/>
    <property type="evidence" value="ECO:0000314"/>
    <property type="project" value="UniProtKB"/>
</dbReference>
<dbReference type="GO" id="GO:0034599">
    <property type="term" value="P:cellular response to oxidative stress"/>
    <property type="evidence" value="ECO:0000315"/>
    <property type="project" value="UniProtKB"/>
</dbReference>
<dbReference type="GO" id="GO:0042044">
    <property type="term" value="P:fluid transport"/>
    <property type="evidence" value="ECO:0000250"/>
    <property type="project" value="UniProtKB"/>
</dbReference>
<dbReference type="GO" id="GO:0030003">
    <property type="term" value="P:intracellular monoatomic cation homeostasis"/>
    <property type="evidence" value="ECO:0000314"/>
    <property type="project" value="HGNC-UCL"/>
</dbReference>
<dbReference type="GO" id="GO:0006820">
    <property type="term" value="P:monoatomic anion transport"/>
    <property type="evidence" value="ECO:0007669"/>
    <property type="project" value="InterPro"/>
</dbReference>
<dbReference type="GO" id="GO:0050801">
    <property type="term" value="P:monoatomic ion homeostasis"/>
    <property type="evidence" value="ECO:0000318"/>
    <property type="project" value="GO_Central"/>
</dbReference>
<dbReference type="GO" id="GO:1902600">
    <property type="term" value="P:proton transmembrane transport"/>
    <property type="evidence" value="ECO:0000314"/>
    <property type="project" value="HGNC-UCL"/>
</dbReference>
<dbReference type="GO" id="GO:2000739">
    <property type="term" value="P:regulation of mesenchymal stem cell differentiation"/>
    <property type="evidence" value="ECO:0000250"/>
    <property type="project" value="UniProtKB"/>
</dbReference>
<dbReference type="GO" id="GO:0051881">
    <property type="term" value="P:regulation of mitochondrial membrane potential"/>
    <property type="evidence" value="ECO:0000315"/>
    <property type="project" value="UniProtKB"/>
</dbReference>
<dbReference type="GO" id="GO:0006814">
    <property type="term" value="P:sodium ion transport"/>
    <property type="evidence" value="ECO:0000314"/>
    <property type="project" value="HGNC-UCL"/>
</dbReference>
<dbReference type="GO" id="GO:0055085">
    <property type="term" value="P:transmembrane transport"/>
    <property type="evidence" value="ECO:0000318"/>
    <property type="project" value="GO_Central"/>
</dbReference>
<dbReference type="FunFam" id="1.10.287.570:FF:000002">
    <property type="entry name" value="Solute carrier family 4 member 11"/>
    <property type="match status" value="1"/>
</dbReference>
<dbReference type="FunFam" id="3.40.930.10:FF:000013">
    <property type="entry name" value="Solute carrier family 4 member 11"/>
    <property type="match status" value="1"/>
</dbReference>
<dbReference type="Gene3D" id="1.10.287.570">
    <property type="entry name" value="Helical hairpin bin"/>
    <property type="match status" value="1"/>
</dbReference>
<dbReference type="Gene3D" id="3.40.930.10">
    <property type="entry name" value="Mannitol-specific EII, Chain A"/>
    <property type="match status" value="1"/>
</dbReference>
<dbReference type="InterPro" id="IPR011531">
    <property type="entry name" value="HCO3_transpt-like_TM_dom"/>
</dbReference>
<dbReference type="InterPro" id="IPR003020">
    <property type="entry name" value="HCO3_transpt_euk"/>
</dbReference>
<dbReference type="InterPro" id="IPR016152">
    <property type="entry name" value="PTrfase/Anion_transptr"/>
</dbReference>
<dbReference type="PANTHER" id="PTHR11453">
    <property type="entry name" value="ANION EXCHANGE PROTEIN"/>
    <property type="match status" value="1"/>
</dbReference>
<dbReference type="PANTHER" id="PTHR11453:SF127">
    <property type="entry name" value="SOLUTE CARRIER FAMILY 4 MEMBER 11"/>
    <property type="match status" value="1"/>
</dbReference>
<dbReference type="Pfam" id="PF00955">
    <property type="entry name" value="HCO3_cotransp"/>
    <property type="match status" value="1"/>
</dbReference>
<dbReference type="PRINTS" id="PR01231">
    <property type="entry name" value="HCO3TRNSPORT"/>
</dbReference>
<dbReference type="SUPFAM" id="SSF55804">
    <property type="entry name" value="Phoshotransferase/anion transport protein"/>
    <property type="match status" value="1"/>
</dbReference>
<evidence type="ECO:0000250" key="1">
    <source>
        <dbReference type="UniProtKB" id="A2AJN7"/>
    </source>
</evidence>
<evidence type="ECO:0000255" key="2"/>
<evidence type="ECO:0000269" key="3">
    <source>
    </source>
</evidence>
<evidence type="ECO:0000269" key="4">
    <source>
    </source>
</evidence>
<evidence type="ECO:0000269" key="5">
    <source>
    </source>
</evidence>
<evidence type="ECO:0000269" key="6">
    <source>
    </source>
</evidence>
<evidence type="ECO:0000269" key="7">
    <source>
    </source>
</evidence>
<evidence type="ECO:0000269" key="8">
    <source>
    </source>
</evidence>
<evidence type="ECO:0000269" key="9">
    <source>
    </source>
</evidence>
<evidence type="ECO:0000269" key="10">
    <source>
    </source>
</evidence>
<evidence type="ECO:0000269" key="11">
    <source>
    </source>
</evidence>
<evidence type="ECO:0000269" key="12">
    <source>
    </source>
</evidence>
<evidence type="ECO:0000269" key="13">
    <source>
    </source>
</evidence>
<evidence type="ECO:0000269" key="14">
    <source>
    </source>
</evidence>
<evidence type="ECO:0000269" key="15">
    <source>
    </source>
</evidence>
<evidence type="ECO:0000269" key="16">
    <source>
    </source>
</evidence>
<evidence type="ECO:0000269" key="17">
    <source>
    </source>
</evidence>
<evidence type="ECO:0000269" key="18">
    <source>
    </source>
</evidence>
<evidence type="ECO:0000269" key="19">
    <source>
    </source>
</evidence>
<evidence type="ECO:0000269" key="20">
    <source>
    </source>
</evidence>
<evidence type="ECO:0000269" key="21">
    <source>
    </source>
</evidence>
<evidence type="ECO:0000269" key="22">
    <source>
    </source>
</evidence>
<evidence type="ECO:0000269" key="23">
    <source>
    </source>
</evidence>
<evidence type="ECO:0000269" key="24">
    <source>
    </source>
</evidence>
<evidence type="ECO:0000303" key="25">
    <source>
    </source>
</evidence>
<evidence type="ECO:0000303" key="26">
    <source>
    </source>
</evidence>
<evidence type="ECO:0000303" key="27">
    <source>
    </source>
</evidence>
<evidence type="ECO:0000305" key="28"/>
<evidence type="ECO:0000305" key="29">
    <source>
    </source>
</evidence>
<evidence type="ECO:0000305" key="30">
    <source>
    </source>
</evidence>
<evidence type="ECO:0000305" key="31">
    <source>
    </source>
</evidence>
<evidence type="ECO:0007829" key="32">
    <source>
        <dbReference type="PDB" id="7X1G"/>
    </source>
</evidence>
<evidence type="ECO:0007829" key="33">
    <source>
        <dbReference type="PDB" id="7X1H"/>
    </source>
</evidence>
<reference key="1">
    <citation type="journal article" date="2001" name="Biochem. Biophys. Res. Commun.">
        <title>Human BTR1, a new bicarbonate transporter superfamily member and human AE4 from kidney.</title>
        <authorList>
            <person name="Parker M.D."/>
            <person name="Ourmozdi E.P."/>
            <person name="Tanner M.J.A."/>
        </authorList>
    </citation>
    <scope>NUCLEOTIDE SEQUENCE [MRNA] (ISOFORM 1)</scope>
    <scope>TISSUE SPECIFICITY</scope>
    <scope>VARIANTS HIS-392; ASN-393; THR-467 AND ALA-692</scope>
    <source>
        <tissue>Kidney</tissue>
    </source>
</reference>
<reference key="2">
    <citation type="journal article" date="2004" name="Nat. Genet.">
        <title>Complete sequencing and characterization of 21,243 full-length human cDNAs.</title>
        <authorList>
            <person name="Ota T."/>
            <person name="Suzuki Y."/>
            <person name="Nishikawa T."/>
            <person name="Otsuki T."/>
            <person name="Sugiyama T."/>
            <person name="Irie R."/>
            <person name="Wakamatsu A."/>
            <person name="Hayashi K."/>
            <person name="Sato H."/>
            <person name="Nagai K."/>
            <person name="Kimura K."/>
            <person name="Makita H."/>
            <person name="Sekine M."/>
            <person name="Obayashi M."/>
            <person name="Nishi T."/>
            <person name="Shibahara T."/>
            <person name="Tanaka T."/>
            <person name="Ishii S."/>
            <person name="Yamamoto J."/>
            <person name="Saito K."/>
            <person name="Kawai Y."/>
            <person name="Isono Y."/>
            <person name="Nakamura Y."/>
            <person name="Nagahari K."/>
            <person name="Murakami K."/>
            <person name="Yasuda T."/>
            <person name="Iwayanagi T."/>
            <person name="Wagatsuma M."/>
            <person name="Shiratori A."/>
            <person name="Sudo H."/>
            <person name="Hosoiri T."/>
            <person name="Kaku Y."/>
            <person name="Kodaira H."/>
            <person name="Kondo H."/>
            <person name="Sugawara M."/>
            <person name="Takahashi M."/>
            <person name="Kanda K."/>
            <person name="Yokoi T."/>
            <person name="Furuya T."/>
            <person name="Kikkawa E."/>
            <person name="Omura Y."/>
            <person name="Abe K."/>
            <person name="Kamihara K."/>
            <person name="Katsuta N."/>
            <person name="Sato K."/>
            <person name="Tanikawa M."/>
            <person name="Yamazaki M."/>
            <person name="Ninomiya K."/>
            <person name="Ishibashi T."/>
            <person name="Yamashita H."/>
            <person name="Murakawa K."/>
            <person name="Fujimori K."/>
            <person name="Tanai H."/>
            <person name="Kimata M."/>
            <person name="Watanabe M."/>
            <person name="Hiraoka S."/>
            <person name="Chiba Y."/>
            <person name="Ishida S."/>
            <person name="Ono Y."/>
            <person name="Takiguchi S."/>
            <person name="Watanabe S."/>
            <person name="Yosida M."/>
            <person name="Hotuta T."/>
            <person name="Kusano J."/>
            <person name="Kanehori K."/>
            <person name="Takahashi-Fujii A."/>
            <person name="Hara H."/>
            <person name="Tanase T.-O."/>
            <person name="Nomura Y."/>
            <person name="Togiya S."/>
            <person name="Komai F."/>
            <person name="Hara R."/>
            <person name="Takeuchi K."/>
            <person name="Arita M."/>
            <person name="Imose N."/>
            <person name="Musashino K."/>
            <person name="Yuuki H."/>
            <person name="Oshima A."/>
            <person name="Sasaki N."/>
            <person name="Aotsuka S."/>
            <person name="Yoshikawa Y."/>
            <person name="Matsunawa H."/>
            <person name="Ichihara T."/>
            <person name="Shiohata N."/>
            <person name="Sano S."/>
            <person name="Moriya S."/>
            <person name="Momiyama H."/>
            <person name="Satoh N."/>
            <person name="Takami S."/>
            <person name="Terashima Y."/>
            <person name="Suzuki O."/>
            <person name="Nakagawa S."/>
            <person name="Senoh A."/>
            <person name="Mizoguchi H."/>
            <person name="Goto Y."/>
            <person name="Shimizu F."/>
            <person name="Wakebe H."/>
            <person name="Hishigaki H."/>
            <person name="Watanabe T."/>
            <person name="Sugiyama A."/>
            <person name="Takemoto M."/>
            <person name="Kawakami B."/>
            <person name="Yamazaki M."/>
            <person name="Watanabe K."/>
            <person name="Kumagai A."/>
            <person name="Itakura S."/>
            <person name="Fukuzumi Y."/>
            <person name="Fujimori Y."/>
            <person name="Komiyama M."/>
            <person name="Tashiro H."/>
            <person name="Tanigami A."/>
            <person name="Fujiwara T."/>
            <person name="Ono T."/>
            <person name="Yamada K."/>
            <person name="Fujii Y."/>
            <person name="Ozaki K."/>
            <person name="Hirao M."/>
            <person name="Ohmori Y."/>
            <person name="Kawabata A."/>
            <person name="Hikiji T."/>
            <person name="Kobatake N."/>
            <person name="Inagaki H."/>
            <person name="Ikema Y."/>
            <person name="Okamoto S."/>
            <person name="Okitani R."/>
            <person name="Kawakami T."/>
            <person name="Noguchi S."/>
            <person name="Itoh T."/>
            <person name="Shigeta K."/>
            <person name="Senba T."/>
            <person name="Matsumura K."/>
            <person name="Nakajima Y."/>
            <person name="Mizuno T."/>
            <person name="Morinaga M."/>
            <person name="Sasaki M."/>
            <person name="Togashi T."/>
            <person name="Oyama M."/>
            <person name="Hata H."/>
            <person name="Watanabe M."/>
            <person name="Komatsu T."/>
            <person name="Mizushima-Sugano J."/>
            <person name="Satoh T."/>
            <person name="Shirai Y."/>
            <person name="Takahashi Y."/>
            <person name="Nakagawa K."/>
            <person name="Okumura K."/>
            <person name="Nagase T."/>
            <person name="Nomura N."/>
            <person name="Kikuchi H."/>
            <person name="Masuho Y."/>
            <person name="Yamashita R."/>
            <person name="Nakai K."/>
            <person name="Yada T."/>
            <person name="Nakamura Y."/>
            <person name="Ohara O."/>
            <person name="Isogai T."/>
            <person name="Sugano S."/>
        </authorList>
    </citation>
    <scope>NUCLEOTIDE SEQUENCE [LARGE SCALE MRNA] (ISOFORMS 3 AND 4)</scope>
    <scope>NUCLEOTIDE SEQUENCE [LARGE SCALE MRNA] OF 211-875 (ISOFORM 1)</scope>
    <source>
        <tissue>Retinoblastoma</tissue>
        <tissue>Thalamus</tissue>
        <tissue>Tongue</tissue>
    </source>
</reference>
<reference key="3">
    <citation type="journal article" date="2001" name="Nature">
        <title>The DNA sequence and comparative analysis of human chromosome 20.</title>
        <authorList>
            <person name="Deloukas P."/>
            <person name="Matthews L.H."/>
            <person name="Ashurst J.L."/>
            <person name="Burton J."/>
            <person name="Gilbert J.G.R."/>
            <person name="Jones M."/>
            <person name="Stavrides G."/>
            <person name="Almeida J.P."/>
            <person name="Babbage A.K."/>
            <person name="Bagguley C.L."/>
            <person name="Bailey J."/>
            <person name="Barlow K.F."/>
            <person name="Bates K.N."/>
            <person name="Beard L.M."/>
            <person name="Beare D.M."/>
            <person name="Beasley O.P."/>
            <person name="Bird C.P."/>
            <person name="Blakey S.E."/>
            <person name="Bridgeman A.M."/>
            <person name="Brown A.J."/>
            <person name="Buck D."/>
            <person name="Burrill W.D."/>
            <person name="Butler A.P."/>
            <person name="Carder C."/>
            <person name="Carter N.P."/>
            <person name="Chapman J.C."/>
            <person name="Clamp M."/>
            <person name="Clark G."/>
            <person name="Clark L.N."/>
            <person name="Clark S.Y."/>
            <person name="Clee C.M."/>
            <person name="Clegg S."/>
            <person name="Cobley V.E."/>
            <person name="Collier R.E."/>
            <person name="Connor R.E."/>
            <person name="Corby N.R."/>
            <person name="Coulson A."/>
            <person name="Coville G.J."/>
            <person name="Deadman R."/>
            <person name="Dhami P.D."/>
            <person name="Dunn M."/>
            <person name="Ellington A.G."/>
            <person name="Frankland J.A."/>
            <person name="Fraser A."/>
            <person name="French L."/>
            <person name="Garner P."/>
            <person name="Grafham D.V."/>
            <person name="Griffiths C."/>
            <person name="Griffiths M.N.D."/>
            <person name="Gwilliam R."/>
            <person name="Hall R.E."/>
            <person name="Hammond S."/>
            <person name="Harley J.L."/>
            <person name="Heath P.D."/>
            <person name="Ho S."/>
            <person name="Holden J.L."/>
            <person name="Howden P.J."/>
            <person name="Huckle E."/>
            <person name="Hunt A.R."/>
            <person name="Hunt S.E."/>
            <person name="Jekosch K."/>
            <person name="Johnson C.M."/>
            <person name="Johnson D."/>
            <person name="Kay M.P."/>
            <person name="Kimberley A.M."/>
            <person name="King A."/>
            <person name="Knights A."/>
            <person name="Laird G.K."/>
            <person name="Lawlor S."/>
            <person name="Lehvaeslaiho M.H."/>
            <person name="Leversha M.A."/>
            <person name="Lloyd C."/>
            <person name="Lloyd D.M."/>
            <person name="Lovell J.D."/>
            <person name="Marsh V.L."/>
            <person name="Martin S.L."/>
            <person name="McConnachie L.J."/>
            <person name="McLay K."/>
            <person name="McMurray A.A."/>
            <person name="Milne S.A."/>
            <person name="Mistry D."/>
            <person name="Moore M.J.F."/>
            <person name="Mullikin J.C."/>
            <person name="Nickerson T."/>
            <person name="Oliver K."/>
            <person name="Parker A."/>
            <person name="Patel R."/>
            <person name="Pearce T.A.V."/>
            <person name="Peck A.I."/>
            <person name="Phillimore B.J.C.T."/>
            <person name="Prathalingam S.R."/>
            <person name="Plumb R.W."/>
            <person name="Ramsay H."/>
            <person name="Rice C.M."/>
            <person name="Ross M.T."/>
            <person name="Scott C.E."/>
            <person name="Sehra H.K."/>
            <person name="Shownkeen R."/>
            <person name="Sims S."/>
            <person name="Skuce C.D."/>
            <person name="Smith M.L."/>
            <person name="Soderlund C."/>
            <person name="Steward C.A."/>
            <person name="Sulston J.E."/>
            <person name="Swann R.M."/>
            <person name="Sycamore N."/>
            <person name="Taylor R."/>
            <person name="Tee L."/>
            <person name="Thomas D.W."/>
            <person name="Thorpe A."/>
            <person name="Tracey A."/>
            <person name="Tromans A.C."/>
            <person name="Vaudin M."/>
            <person name="Wall M."/>
            <person name="Wallis J.M."/>
            <person name="Whitehead S.L."/>
            <person name="Whittaker P."/>
            <person name="Willey D.L."/>
            <person name="Williams L."/>
            <person name="Williams S.A."/>
            <person name="Wilming L."/>
            <person name="Wray P.W."/>
            <person name="Hubbard T."/>
            <person name="Durbin R.M."/>
            <person name="Bentley D.R."/>
            <person name="Beck S."/>
            <person name="Rogers J."/>
        </authorList>
    </citation>
    <scope>NUCLEOTIDE SEQUENCE [LARGE SCALE GENOMIC DNA]</scope>
</reference>
<reference key="4">
    <citation type="submission" date="2005-09" db="EMBL/GenBank/DDBJ databases">
        <authorList>
            <person name="Mural R.J."/>
            <person name="Istrail S."/>
            <person name="Sutton G."/>
            <person name="Florea L."/>
            <person name="Halpern A.L."/>
            <person name="Mobarry C.M."/>
            <person name="Lippert R."/>
            <person name="Walenz B."/>
            <person name="Shatkay H."/>
            <person name="Dew I."/>
            <person name="Miller J.R."/>
            <person name="Flanigan M.J."/>
            <person name="Edwards N.J."/>
            <person name="Bolanos R."/>
            <person name="Fasulo D."/>
            <person name="Halldorsson B.V."/>
            <person name="Hannenhalli S."/>
            <person name="Turner R."/>
            <person name="Yooseph S."/>
            <person name="Lu F."/>
            <person name="Nusskern D.R."/>
            <person name="Shue B.C."/>
            <person name="Zheng X.H."/>
            <person name="Zhong F."/>
            <person name="Delcher A.L."/>
            <person name="Huson D.H."/>
            <person name="Kravitz S.A."/>
            <person name="Mouchard L."/>
            <person name="Reinert K."/>
            <person name="Remington K.A."/>
            <person name="Clark A.G."/>
            <person name="Waterman M.S."/>
            <person name="Eichler E.E."/>
            <person name="Adams M.D."/>
            <person name="Hunkapiller M.W."/>
            <person name="Myers E.W."/>
            <person name="Venter J.C."/>
        </authorList>
    </citation>
    <scope>NUCLEOTIDE SEQUENCE [LARGE SCALE GENOMIC DNA]</scope>
</reference>
<reference key="5">
    <citation type="journal article" date="2004" name="Genome Res.">
        <title>The status, quality, and expansion of the NIH full-length cDNA project: the Mammalian Gene Collection (MGC).</title>
        <authorList>
            <consortium name="The MGC Project Team"/>
        </authorList>
    </citation>
    <scope>NUCLEOTIDE SEQUENCE [LARGE SCALE MRNA] (ISOFORMS 1 AND 2)</scope>
</reference>
<reference key="6">
    <citation type="journal article" date="2004" name="Mol. Cell">
        <title>NaBC1 is a ubiquitous electrogenic Na+-coupled borate transporter essential for cellular boron homeostasis and cell growth and proliferation.</title>
        <authorList>
            <person name="Park M."/>
            <person name="Li Q."/>
            <person name="Shcheynikov N."/>
            <person name="Zeng W."/>
            <person name="Muallem S."/>
        </authorList>
    </citation>
    <scope>FUNCTION</scope>
    <scope>TRANSPORTER ACTIVITY</scope>
</reference>
<reference key="7">
    <citation type="journal article" date="2011" name="Biochemistry">
        <title>A biochemical framework for SLC4A11, the plasma membrane protein defective in corneal dystrophies.</title>
        <authorList>
            <person name="Vilas G.L."/>
            <person name="Morgan P.E."/>
            <person name="Loganathan S.K."/>
            <person name="Quon A."/>
            <person name="Casey J.R."/>
        </authorList>
    </citation>
    <scope>TOPOLOGY</scope>
    <scope>CHARACTERIZATION OF VARIANTS CHED HIS-109; LYS-127; VAL-253; ARG-370; ASP-448; LEU-473; GLN-739; TRP-739 AND CYS-853</scope>
</reference>
<reference key="8">
    <citation type="journal article" date="2013" name="Hum. Mol. Genet.">
        <title>Transmembrane water-flux through SLC4A11: a route defective in genetic corneal diseases.</title>
        <authorList>
            <person name="Vilas G.L."/>
            <person name="Loganathan S.K."/>
            <person name="Liu J."/>
            <person name="Riau A.K."/>
            <person name="Young J.D."/>
            <person name="Mehta J.S."/>
            <person name="Vithana E.N."/>
            <person name="Casey J.R."/>
        </authorList>
    </citation>
    <scope>FUNCTION</scope>
    <scope>SUBCELLULAR LOCATION</scope>
    <scope>CHARACTERIZATION OF VARIANT CHED HIS-109</scope>
    <scope>MUTAGENESIS OF ASN-623</scope>
</reference>
<reference key="9">
    <citation type="journal article" date="2016" name="Am. J. Physiol.">
        <title>Multifunctional ion transport properties of human SLC4A11: comparison of the SLC4A11-B and SLC4A11-C variants.</title>
        <authorList>
            <person name="Kao L."/>
            <person name="Azimov R."/>
            <person name="Shao X.M."/>
            <person name="Frausto R.F."/>
            <person name="Abuladze N."/>
            <person name="Newman D."/>
            <person name="Aldave A.J."/>
            <person name="Kurtz I."/>
        </authorList>
    </citation>
    <scope>FUNCTION</scope>
    <scope>CHARACTERIZATION OF VARIANT CHED HIS-109</scope>
</reference>
<reference key="10">
    <citation type="journal article" date="2017" name="Sci. Rep.">
        <title>SLC4A11 depletion impairs NRF2 mediated antioxidant signaling and increases reactive oxygen species in human corneal endothelial cells during oxidative stress.</title>
        <authorList>
            <person name="Guha S."/>
            <person name="Chaurasia S."/>
            <person name="Ramachandran C."/>
            <person name="Roy S."/>
        </authorList>
    </citation>
    <scope>FUNCTION</scope>
    <scope>INDUCTION</scope>
</reference>
<reference key="11">
    <citation type="journal article" date="2019" name="Sci. Rep.">
        <title>Human Corneal Expression of SLC4A11, a Gene Mutated in Endothelial Corneal Dystrophies.</title>
        <authorList>
            <person name="Malhotra D."/>
            <person name="Loganathan S.K."/>
            <person name="Chiu A.M."/>
            <person name="Lukowski C.M."/>
            <person name="Casey J.R."/>
        </authorList>
    </citation>
    <scope>FUNCTION</scope>
    <scope>TISSUE SPECIFICITY (ISOFORMS 3; 4 AND 5)</scope>
    <scope>TRANSLATION INITIATION SITE (ISOFORM 5)</scope>
    <scope>SUBCELLULAR LOCATION</scope>
</reference>
<reference key="12">
    <citation type="journal article" date="2006" name="Nat. Genet.">
        <title>Mutations in sodium-borate cotransporter SLC4A11 cause recessive congenital hereditary endothelial dystrophy (CHED2).</title>
        <authorList>
            <person name="Vithana E.N."/>
            <person name="Morgan P."/>
            <person name="Sundaresan P."/>
            <person name="Ebenezer N.D."/>
            <person name="Tan D.T.H."/>
            <person name="Mohamed M.D."/>
            <person name="Anand S."/>
            <person name="Khine K.O."/>
            <person name="Venkataraman D."/>
            <person name="Yong V.H.K."/>
            <person name="Salto-Tellez M."/>
            <person name="Venkatraman A."/>
            <person name="Guo K."/>
            <person name="Hemadevi B."/>
            <person name="Srinivasan M."/>
            <person name="Prajna V."/>
            <person name="Khine M."/>
            <person name="Casey J.R."/>
            <person name="Inglehearn C.F."/>
            <person name="Aung T."/>
        </authorList>
    </citation>
    <scope>VARIANTS CHED ASP-448; LEU-473; GLN-739 AND CYS-853</scope>
    <scope>CHARACTERIZATION OF VARIANTS CHED ASP-448; LEU-473; GLN-739 AND CYS-853</scope>
    <scope>TISSUE SPECIFICITY</scope>
</reference>
<reference key="13">
    <citation type="journal article" date="2007" name="Hum. Mutat.">
        <title>Novel SLC4A11 mutations in patients with recessive congenital hereditary endothelial dystrophy (CHED2). Mutation in brief #958. Online.</title>
        <authorList>
            <person name="Ramprasad V.L."/>
            <person name="Ebenezer N.D."/>
            <person name="Aung T."/>
            <person name="Rajagopal R."/>
            <person name="Yong V.H."/>
            <person name="Tuft S.J."/>
            <person name="Viswanathan D."/>
            <person name="El-Ashry M.F."/>
            <person name="Liskova P."/>
            <person name="Tan D.T."/>
            <person name="Bhattacharya S.S."/>
            <person name="Kumaramanickavel G."/>
            <person name="Vithana E.N."/>
        </authorList>
    </citation>
    <scope>VARIANTS CHED LYS-127; ARG-370; TRP-739; GLN-739 AND CYS-853</scope>
</reference>
<reference key="14">
    <citation type="journal article" date="2007" name="J. Med. Genet.">
        <title>Autosomal recessive corneal endothelial dystrophy (CHED2) is associated with mutations in SLC4A11.</title>
        <authorList>
            <person name="Jiao X."/>
            <person name="Sultana A."/>
            <person name="Garg P."/>
            <person name="Ramamurthy B."/>
            <person name="Vemuganti G.K."/>
            <person name="Gangopadhyay N."/>
            <person name="Hejtmancik J.F."/>
            <person name="Kannabiran C."/>
        </authorList>
    </citation>
    <scope>VARIANTS CHED GLN-739; HIS-788; MET-817 AND HIS-853</scope>
    <scope>VARIANT THR-144</scope>
</reference>
<reference key="15">
    <citation type="journal article" date="2007" name="J. Med. Genet.">
        <title>Borate transporter SLC4A11 mutations cause both Harboyan syndrome and non-syndromic corneal endothelial dystrophy.</title>
        <authorList>
            <person name="Desir J."/>
            <person name="Moya G."/>
            <person name="Reish O."/>
            <person name="Van Regemorter N."/>
            <person name="Deconinck H."/>
            <person name="David K.L."/>
            <person name="Meire F.M."/>
            <person name="Abramowicz M.J."/>
        </authorList>
    </citation>
    <scope>VARIANTS CDPD PRO-197; LYS-472; PRO-827 AND VAL-840</scope>
    <scope>VARIANT CHED MET-808</scope>
</reference>
<reference key="16">
    <citation type="journal article" date="2007" name="Mol. Vis.">
        <title>Mutational spectrum of the SLC4A11 gene in autosomal recessive congenital hereditary endothelial dystrophy.</title>
        <authorList>
            <person name="Sultana A."/>
            <person name="Garg P."/>
            <person name="Ramamurthy B."/>
            <person name="Vemuganti G.K."/>
            <person name="Kannabiran C."/>
        </authorList>
    </citation>
    <scope>VARIANTS CHED TRP-193; LEU-197; CYS-217; LYS-385; ASP-402; ARG-457; LEU-473; LYS-568; TRP-739; GLN-739; LEU-757; MET-808 AND CYS-853</scope>
</reference>
<reference key="17">
    <citation type="journal article" date="2008" name="Arch. Ophthalmol.">
        <title>Identification of mutations in the SLC4A11 gene in patients with recessive congenital hereditary endothelial dystrophy.</title>
        <authorList>
            <person name="Hemadevi B."/>
            <person name="Veitia R.A."/>
            <person name="Srinivasan M."/>
            <person name="Arunkumar J."/>
            <person name="Prajna N.V."/>
            <person name="Lesaffre C."/>
            <person name="Sundaresan P."/>
        </authorList>
    </citation>
    <scope>VARIANTS CHED HIS-109; THR-144; VAL-253; ARG-370; TRP-739; LEU-757 AND PRO-857</scope>
</reference>
<reference key="18">
    <citation type="journal article" date="2008" name="Hum. Mol. Genet.">
        <title>SLC4A11 mutations in Fuchs endothelial corneal dystrophy.</title>
        <authorList>
            <person name="Vithana E.N."/>
            <person name="Morgan P.E."/>
            <person name="Ramprasad V."/>
            <person name="Tan D.T.H."/>
            <person name="Yong V.H.K."/>
            <person name="Venkataraman D."/>
            <person name="Venkatraman A."/>
            <person name="Yam G.H.F."/>
            <person name="Nagasamy S."/>
            <person name="Law R.W.K."/>
            <person name="Rajagopal R."/>
            <person name="Pang C.P."/>
            <person name="Kumaramanickevel G."/>
            <person name="Casey J.R."/>
            <person name="Aung T."/>
        </authorList>
    </citation>
    <scope>VARIANTS FECD4 LYS-383; GLU-693 AND MET-738</scope>
    <scope>VARIANTS THR-56; VAL-75; VAL-311; MET-545 AND LEU-549</scope>
    <scope>CHARACTERIZATION OF VARIANTS FECD4 LYS-383; GLU-693 AND MET-738</scope>
    <scope>SUBCELLULAR LOCATION</scope>
    <scope>GLYCOSYLATION</scope>
</reference>
<reference key="19">
    <citation type="journal article" date="2009" name="Invest. Ophthalmol. Vis. Sci.">
        <title>Mutational spectrum of SLC4A11 in autosomal recessive CHED in Saudi Arabia.</title>
        <authorList>
            <person name="Aldahmesh M.A."/>
            <person name="Khan A.O."/>
            <person name="Meyer B.F."/>
            <person name="Alkuraya F.S."/>
        </authorList>
    </citation>
    <scope>VARIANTS CHED ARG-378 AND ASP-402</scope>
</reference>
<reference key="20">
    <citation type="journal article" date="2010" name="Hum. Genet.">
        <title>Novel human pathological mutations. Gene symbol: SLC4A11. Disease: Corneal endothelial dystrophy 2.</title>
        <authorList>
            <person name="Chai S.M."/>
            <person name="Vithana E.N."/>
            <person name="Venkataraman D."/>
            <person name="Saleh H."/>
            <person name="Chekkalichintavida N.P."/>
            <person name="al-Sayyed F."/>
            <person name="Aung T."/>
        </authorList>
    </citation>
    <scope>VARIANT CHED ARG-378</scope>
</reference>
<reference key="21">
    <citation type="journal article" date="2010" name="Hum. Mutat.">
        <title>Missense mutations in the sodium borate cotransporter SLC4A11 cause late-onset Fuchs corneal dystrophya.</title>
        <authorList>
            <person name="Riazuddin S.A."/>
            <person name="Vithana E.N."/>
            <person name="Seet L.F."/>
            <person name="Liu Y."/>
            <person name="Al-Saif A."/>
            <person name="Koh L.W."/>
            <person name="Heng Y.M."/>
            <person name="Aung T."/>
            <person name="Meadows D.N."/>
            <person name="Eghrari A.O."/>
            <person name="Gottsch J.D."/>
            <person name="Katsanis N."/>
        </authorList>
    </citation>
    <scope>VARIANTS FECD4 ASP-151; PRO-266; CYS-510; MET-559; ASP-567; ARG-726 AND SER-818</scope>
    <scope>CHARACTERIZATION OF VARIANTS FECD4 ASP-151; PRO-266; CYS-510; MET-559; ASP-567; ARG-726 AND SER-818</scope>
</reference>
<reference key="22">
    <citation type="journal article" date="2010" name="J. Biol. Chem.">
        <title>SLC4A11 prevents osmotic imbalance leading to corneal endothelial dystrophy, deafness, and polyuria.</title>
        <authorList>
            <person name="Groger N."/>
            <person name="Frohlich H."/>
            <person name="Maier H."/>
            <person name="Olbrich A."/>
            <person name="Kostin S."/>
            <person name="Braun T."/>
            <person name="Boettger T."/>
        </authorList>
    </citation>
    <scope>CHARACTERIZATION OF VARIANT CHED VAL-253</scope>
</reference>
<reference key="23">
    <citation type="journal article" date="2010" name="Mol. Vis.">
        <title>Congenital hereditary endothelial dystrophy - mutation analysis of SLC4A11 and genotype-phenotype correlation in a North Indian patient cohort.</title>
        <authorList>
            <person name="Paliwal P."/>
            <person name="Sharma A."/>
            <person name="Tandon R."/>
            <person name="Sharma N."/>
            <person name="Titiyal J.S."/>
            <person name="Sen S."/>
            <person name="Nag T.C."/>
            <person name="Vajpayee R.B."/>
        </authorList>
    </citation>
    <scope>VARIANTS CHED ARG-370 AND MET-808</scope>
</reference>
<reference key="24">
    <citation type="journal article" date="2012" name="Hum. Mutat.">
        <title>Oligomerization of SLC4A11 protein and the severity of FECD and CHED2 corneal dystrophies caused by SLC4A11 mutations.</title>
        <authorList>
            <person name="Vilas G.L."/>
            <person name="Loganathan S.K."/>
            <person name="Quon A."/>
            <person name="Sundaresan P."/>
            <person name="Vithana E.N."/>
            <person name="Casey J."/>
        </authorList>
    </citation>
    <scope>CHARACTERIZATION OF VARIANTS CHED LYS-127; ARG-370 AND TRP-739</scope>
    <scope>CHARACTERIZATION OF VARIANTS FECD4 LYS-383; GLU-693 AND MET-738</scope>
    <scope>HOMODIMERIZATION</scope>
</reference>
<reference key="25">
    <citation type="journal article" date="2014" name="J. Hum. Genet.">
        <title>Biosynthetic and functional defects in newly identified SLC4A11 mutants and absence of COL8A2 mutations in Fuchs endothelial corneal dystrophy.</title>
        <authorList>
            <person name="Soumittra N."/>
            <person name="Loganathan S.K."/>
            <person name="Madhavan D."/>
            <person name="Ramprasad V.L."/>
            <person name="Arokiasamy T."/>
            <person name="Sumathi S."/>
            <person name="Karthiyayini T."/>
            <person name="Rachapalli S.R."/>
            <person name="Kumaramanickavel G."/>
            <person name="Casey J.R."/>
            <person name="Rajagopal R."/>
        </authorList>
    </citation>
    <scope>VARIANTS FECD4 SER-224; LYS-383; ILE-418 AND ILE-491</scope>
    <scope>CHARACTERIZATION OF VARIANTS FECD4 SER-224; ILE-418 AND ILE-491</scope>
    <scope>FUNCTION</scope>
    <scope>SUBCELLULAR LOCATION</scope>
</reference>
<reference key="26">
    <citation type="journal article" date="2016" name="Clin. Exp. Optom.">
        <title>Missense mutation in SLC4A11 in two Pakistani families affected with congenital hereditary endothelial dystrophy (CHED2).</title>
        <authorList>
            <person name="Kaul H."/>
            <person name="Suman M."/>
            <person name="Khan Z."/>
            <person name="Ullah M.I."/>
            <person name="Ashfaq U.A."/>
            <person name="Idrees S."/>
        </authorList>
    </citation>
    <scope>VARIANT CHED ALA-659</scope>
</reference>
<name>S4A11_HUMAN</name>
<proteinExistence type="evidence at protein level"/>
<comment type="function">
    <text evidence="1 4 19 20 22 23 24">Multifunctional transporter with an impact in cell morphology and differentiation. In the presence of borate B(OH)4(-), acts as a voltage-dependent electrogenic Na(+)-coupled B(OH)4(-) cotransporter controlling boron homeostasis (PubMed:15525507). At early stages of stem cell differentiation, participates in synergy with ITGA5-ITGB1 and ITGAV-ITGB3 integrins and BMPR1A to promote cell adhesion and contractility that drives differentiation toward osteogenic commitment while inhibiting adipogenesis (By similarity). In the absence of B(OH)4(-), acts as a Na(+)-coupled OH(-) or H(+) permeable channel with implications in cellular redox balance (PubMed:15525507, PubMed:28642546). Regulates the oxidative stress response in corneal endothelium by enhancing antioxidant defenses and protecting cells from reactive oxygen species (PubMed:28642546). In response to hypo-osmotic challenge, also acts as a water permeable channel at the basolateral cell membrane of corneal endothelial cells and facilitates transendothelial fluid reabsorption in the aqueous humor (PubMed:23813972, PubMed:25007886, PubMed:31273259). In the presence of ammonia, acts as an electrogenic NH3/H(+) cotransporter and may play a role in ammonia transport and reabsorption in renal Henle's loop epithelium (PubMed:27581649).</text>
</comment>
<comment type="catalytic activity">
    <reaction evidence="4">
        <text>tetrahydroxoborate(in) + 2 Na(+)(in) = tetrahydroxoborate(out) + 2 Na(+)(out)</text>
        <dbReference type="Rhea" id="RHEA:66816"/>
        <dbReference type="ChEBI" id="CHEBI:29101"/>
        <dbReference type="ChEBI" id="CHEBI:41132"/>
    </reaction>
    <physiologicalReaction direction="left-to-right" evidence="29">
        <dbReference type="Rhea" id="RHEA:66817"/>
    </physiologicalReaction>
</comment>
<comment type="subunit">
    <text evidence="18">Homodimer.</text>
</comment>
<comment type="subcellular location">
    <subcellularLocation>
        <location evidence="10 20 24">Cell membrane</location>
        <topology evidence="2">Multi-pass membrane protein</topology>
    </subcellularLocation>
    <subcellularLocation>
        <location evidence="19">Basolateral cell membrane</location>
        <topology evidence="2">Multi-pass membrane protein</topology>
    </subcellularLocation>
</comment>
<comment type="alternative products">
    <event type="alternative splicing"/>
    <event type="alternative initiation"/>
    <isoform>
        <id>Q8NBS3-3</id>
        <name>3</name>
        <name evidence="27">SLC4A11-v3</name>
        <sequence type="displayed"/>
    </isoform>
    <isoform>
        <id>Q8NBS3-1</id>
        <name>1</name>
        <name evidence="27">SLC4A11-v2-M1</name>
        <sequence type="described" ref="VSP_061109"/>
    </isoform>
    <isoform>
        <id>Q8NBS3-2</id>
        <name>2</name>
        <sequence type="described" ref="VSP_061106"/>
    </isoform>
    <isoform>
        <id>Q8NBS3-4</id>
        <name>4</name>
        <name evidence="27">SLC4A11-v1</name>
        <sequence type="described" ref="VSP_061108"/>
    </isoform>
    <isoform>
        <id>Q8NBS3-5</id>
        <name>5</name>
        <name evidence="27">SLC4A11-v2-M36</name>
        <sequence type="described" ref="VSP_061107"/>
    </isoform>
</comment>
<comment type="tissue specificity">
    <text evidence="3 5">Widely expressed. Highly expressed in kidney, testis, salivary gland, thyroid, trachea and corneal endothelium. Not detected in retina and lymphocytes.</text>
</comment>
<comment type="tissue specificity">
    <molecule>Isoform 3</molecule>
    <text evidence="24">Expressed in corneal endothelium (at protein level).</text>
</comment>
<comment type="tissue specificity">
    <molecule>Isoform 5</molecule>
    <text evidence="24">The predominant isoform in corneal endothelium (at protein level).</text>
</comment>
<comment type="tissue specificity">
    <molecule>Isoform 4</molecule>
    <text evidence="24">Low expression levels, if any, in cornea.</text>
</comment>
<comment type="induction">
    <text evidence="23">Up-regulated upon oxidative stress, as it occurs in cells exposed to tert-butyl hydroperoxide.</text>
</comment>
<comment type="PTM">
    <text evidence="10">Glycosylated.</text>
</comment>
<comment type="disease" evidence="7">
    <disease id="DI-01426">
        <name>Corneal dystrophy and perceptive deafness</name>
        <acronym>CDPD</acronym>
        <description>An ocular disease characterized by the association of corneal clouding with progressive perceptive hearing loss.</description>
        <dbReference type="MIM" id="217400"/>
    </disease>
    <text>The disease is caused by variants affecting the gene represented in this entry.</text>
</comment>
<comment type="disease" evidence="5 6 7 8 9 11 12 13 14 16 17 18 19 21 22">
    <disease id="DI-01430">
        <name>Corneal endothelial dystrophy</name>
        <acronym>CHED</acronym>
        <description>A congenital corneal dystrophy characterized by thickening and opacification of the cornea, altered morphology of the endothelium, and secretion of an abnormal collagenous layer at the Descemet membrane.</description>
        <dbReference type="MIM" id="217700"/>
    </disease>
    <text>The disease is caused by variants affecting the gene represented in this entry.</text>
</comment>
<comment type="disease" evidence="10 15 18 20">
    <disease id="DI-02765">
        <name>Corneal dystrophy, Fuchs endothelial, 4</name>
        <acronym>FECD4</acronym>
        <description>A corneal disease caused by loss of endothelium of the central cornea. It is characterized by focal wart-like guttata that arise from Descemet membrane and develop in the central cornea, epithelial blisters, reduced vision and pain. Descemet membrane is thickened by abnormal collagenous deposition.</description>
        <dbReference type="MIM" id="613268"/>
    </disease>
    <text>The disease is caused by variants affecting the gene represented in this entry.</text>
</comment>
<comment type="miscellaneous">
    <text evidence="24">Isoforms 1 and 5 are produced by the usage of alternative translation start sites of the same transcript. There is no evidence for isoform 1 expression in cornea (at protein level).</text>
</comment>
<comment type="similarity">
    <text evidence="28">Belongs to the anion exchanger (TC 2.A.31) family.</text>
</comment>
<comment type="sequence caution" evidence="28">
    <conflict type="erroneous initiation">
        <sequence resource="EMBL-CDS" id="BAC11536"/>
    </conflict>
    <text>Extended N-terminus.</text>
</comment>
<gene>
    <name type="primary">SLC4A11</name>
    <name type="synonym">BTR1</name>
</gene>
<organism>
    <name type="scientific">Homo sapiens</name>
    <name type="common">Human</name>
    <dbReference type="NCBI Taxonomy" id="9606"/>
    <lineage>
        <taxon>Eukaryota</taxon>
        <taxon>Metazoa</taxon>
        <taxon>Chordata</taxon>
        <taxon>Craniata</taxon>
        <taxon>Vertebrata</taxon>
        <taxon>Euteleostomi</taxon>
        <taxon>Mammalia</taxon>
        <taxon>Eutheria</taxon>
        <taxon>Euarchontoglires</taxon>
        <taxon>Primates</taxon>
        <taxon>Haplorrhini</taxon>
        <taxon>Catarrhini</taxon>
        <taxon>Hominidae</taxon>
        <taxon>Homo</taxon>
    </lineage>
</organism>
<protein>
    <recommendedName>
        <fullName>Solute carrier family 4 member 11</fullName>
    </recommendedName>
    <alternativeName>
        <fullName evidence="26">Sodium borate cotransporter 1</fullName>
        <shortName evidence="26">NaBC1</shortName>
    </alternativeName>
</protein>
<keyword id="KW-0002">3D-structure</keyword>
<keyword id="KW-0024">Alternative initiation</keyword>
<keyword id="KW-0025">Alternative splicing</keyword>
<keyword id="KW-0039">Anion exchange</keyword>
<keyword id="KW-1003">Cell membrane</keyword>
<keyword id="KW-1212">Corneal dystrophy</keyword>
<keyword id="KW-0209">Deafness</keyword>
<keyword id="KW-0225">Disease variant</keyword>
<keyword id="KW-0325">Glycoprotein</keyword>
<keyword id="KW-0406">Ion transport</keyword>
<keyword id="KW-0472">Membrane</keyword>
<keyword id="KW-1267">Proteomics identification</keyword>
<keyword id="KW-1185">Reference proteome</keyword>
<keyword id="KW-0769">Symport</keyword>
<keyword id="KW-0812">Transmembrane</keyword>
<keyword id="KW-1133">Transmembrane helix</keyword>
<keyword id="KW-0813">Transport</keyword>
<feature type="chain" id="PRO_0000079236" description="Solute carrier family 4 member 11">
    <location>
        <begin position="1"/>
        <end position="875"/>
    </location>
</feature>
<feature type="topological domain" description="Cytoplasmic" evidence="30">
    <location>
        <begin position="1"/>
        <end position="358"/>
    </location>
</feature>
<feature type="transmembrane region" description="Helical" evidence="2">
    <location>
        <begin position="359"/>
        <end position="381"/>
    </location>
</feature>
<feature type="topological domain" description="Extracellular" evidence="30">
    <location>
        <begin position="382"/>
        <end position="394"/>
    </location>
</feature>
<feature type="transmembrane region" description="Helical" evidence="2">
    <location>
        <begin position="395"/>
        <end position="408"/>
    </location>
</feature>
<feature type="topological domain" description="Cytoplasmic" evidence="30">
    <location>
        <begin position="409"/>
        <end position="413"/>
    </location>
</feature>
<feature type="transmembrane region" description="Helical" evidence="2">
    <location>
        <begin position="414"/>
        <end position="430"/>
    </location>
</feature>
<feature type="topological domain" description="Extracellular" evidence="30">
    <location>
        <begin position="431"/>
        <end position="443"/>
    </location>
</feature>
<feature type="transmembrane region" description="Helical" evidence="2">
    <location>
        <begin position="444"/>
        <end position="467"/>
    </location>
</feature>
<feature type="topological domain" description="Cytoplasmic" evidence="30">
    <location>
        <begin position="468"/>
        <end position="475"/>
    </location>
</feature>
<feature type="transmembrane region" description="Helical" evidence="2">
    <location>
        <begin position="476"/>
        <end position="496"/>
    </location>
</feature>
<feature type="topological domain" description="Extracellular" evidence="30">
    <location>
        <begin position="497"/>
        <end position="555"/>
    </location>
</feature>
<feature type="transmembrane region" description="Helical" evidence="2">
    <location>
        <begin position="556"/>
        <end position="577"/>
    </location>
</feature>
<feature type="topological domain" description="Cytoplasmic" evidence="30">
    <location>
        <begin position="578"/>
        <end position="590"/>
    </location>
</feature>
<feature type="transmembrane region" description="Helical" evidence="2">
    <location>
        <begin position="591"/>
        <end position="612"/>
    </location>
</feature>
<feature type="topological domain" description="Extracellular" evidence="30">
    <location>
        <begin position="613"/>
        <end position="640"/>
    </location>
</feature>
<feature type="transmembrane region" description="Helical" evidence="2">
    <location>
        <begin position="641"/>
        <end position="658"/>
    </location>
</feature>
<feature type="topological domain" description="Cytoplasmic" evidence="30">
    <location>
        <begin position="659"/>
        <end position="683"/>
    </location>
</feature>
<feature type="transmembrane region" description="Helical" evidence="2">
    <location>
        <begin position="684"/>
        <end position="704"/>
    </location>
</feature>
<feature type="topological domain" description="Extracellular" evidence="30">
    <location>
        <begin position="705"/>
        <end position="734"/>
    </location>
</feature>
<feature type="transmembrane region" description="Helical" evidence="2">
    <location>
        <begin position="735"/>
        <end position="759"/>
    </location>
</feature>
<feature type="topological domain" description="Cytoplasmic" evidence="30">
    <location>
        <begin position="760"/>
        <end position="765"/>
    </location>
</feature>
<feature type="transmembrane region" description="Helical" evidence="2">
    <location>
        <begin position="766"/>
        <end position="783"/>
    </location>
</feature>
<feature type="topological domain" description="Extracellular" evidence="30">
    <location>
        <begin position="784"/>
        <end position="787"/>
    </location>
</feature>
<feature type="transmembrane region" description="Helical" evidence="2">
    <location>
        <begin position="788"/>
        <end position="810"/>
    </location>
</feature>
<feature type="topological domain" description="Cytoplasmic" evidence="30">
    <location>
        <begin position="811"/>
        <end position="815"/>
    </location>
</feature>
<feature type="transmembrane region" description="Helical" evidence="2">
    <location>
        <begin position="816"/>
        <end position="832"/>
    </location>
</feature>
<feature type="topological domain" description="Extracellular" evidence="30">
    <location>
        <begin position="833"/>
        <end position="836"/>
    </location>
</feature>
<feature type="transmembrane region" description="Helical" evidence="2">
    <location>
        <begin position="837"/>
        <end position="857"/>
    </location>
</feature>
<feature type="topological domain" description="Cytoplasmic" evidence="30">
    <location>
        <begin position="858"/>
        <end position="875"/>
    </location>
</feature>
<feature type="glycosylation site" description="N-linked (GlcNAc...) asparagine" evidence="2">
    <location>
        <position position="529"/>
    </location>
</feature>
<feature type="glycosylation site" description="N-linked (GlcNAc...) asparagine" evidence="2">
    <location>
        <position position="537"/>
    </location>
</feature>
<feature type="splice variant" id="VSP_061106" description="In isoform 2." evidence="25">
    <location>
        <begin position="1"/>
        <end position="466"/>
    </location>
</feature>
<feature type="splice variant" id="VSP_061107" description="In isoform 5." evidence="31">
    <location>
        <begin position="1"/>
        <end position="19"/>
    </location>
</feature>
<feature type="splice variant" id="VSP_061108" description="In isoform 4.">
    <original>MAAATRRVFHLQPC</original>
    <variation>MGVYGPQDRSESEKRDVQRDPPPWHPRREGERPARARSLPLAAAGQGFLRKTWISEH</variation>
    <location>
        <begin position="1"/>
        <end position="14"/>
    </location>
</feature>
<feature type="splice variant" id="VSP_061109" description="In isoform 1.">
    <original>AAATRRVFHLQPC</original>
    <variation>SQVGGRGDRCTQEVQGLVHGAGDLSASLA</variation>
    <location>
        <begin position="2"/>
        <end position="14"/>
    </location>
</feature>
<feature type="sequence variant" id="VAR_047806" description="In dbSNP:rs778688114." evidence="10">
    <original>N</original>
    <variation>T</variation>
    <location>
        <position position="56"/>
    </location>
</feature>
<feature type="sequence variant" id="VAR_047807" description="In dbSNP:rs200940928." evidence="10">
    <original>M</original>
    <variation>V</variation>
    <location>
        <position position="75"/>
    </location>
</feature>
<feature type="sequence variant" id="VAR_063713" description="In CHED; does not facilitate water flux across the plasma membrane; decreases proton flux with or without cotransport of ammonia; does not affect protein processing; dbSNP:rs1276051624." evidence="11 17 19 22">
    <original>R</original>
    <variation>H</variation>
    <location>
        <position position="109"/>
    </location>
</feature>
<feature type="sequence variant" id="VAR_067272" description="In CHED; affects protein processing; the mutant protein is retained intracellularly; coexpression with wild-type protein partially rescues the cell surface trafficking of CHED2 mutant; dbSNP:rs1482631297." evidence="8 17 18">
    <original>E</original>
    <variation>K</variation>
    <location>
        <position position="127"/>
    </location>
</feature>
<feature type="sequence variant" id="VAR_034944" description="In dbSNP:rs34520315.">
    <original>N</original>
    <variation>S</variation>
    <location>
        <position position="134"/>
    </location>
</feature>
<feature type="sequence variant" id="VAR_034945" description="In CHED; dbSNP:rs752287261." evidence="6 11">
    <original>A</original>
    <variation>T</variation>
    <location>
        <position position="144"/>
    </location>
</feature>
<feature type="sequence variant" id="VAR_064422" description="In FECD4; interferes with post-translational processing; the mutant protein localizes to the cytoplasm; dbSNP:rs141836046." evidence="15">
    <original>E</original>
    <variation>D</variation>
    <location>
        <position position="151"/>
    </location>
</feature>
<feature type="sequence variant" id="VAR_064978" description="In CHED; dbSNP:rs566507872." evidence="9">
    <original>R</original>
    <variation>W</variation>
    <location>
        <position position="193"/>
    </location>
</feature>
<feature type="sequence variant" id="VAR_064979" description="In CHED; dbSNP:rs759667344." evidence="9">
    <original>S</original>
    <variation>L</variation>
    <location>
        <position position="197"/>
    </location>
</feature>
<feature type="sequence variant" id="VAR_034946" description="In CDPD; dbSNP:rs121909395." evidence="7">
    <original>S</original>
    <variation>P</variation>
    <location>
        <position position="197"/>
    </location>
</feature>
<feature type="sequence variant" id="VAR_064980" description="In CHED; dbSNP:rs762942751." evidence="9">
    <original>R</original>
    <variation>C</variation>
    <location>
        <position position="217"/>
    </location>
</feature>
<feature type="sequence variant" id="VAR_075537" description="In FECD4; decreases cell surface expression; abolishes functional activity; dbSNP:rs746532062." evidence="20">
    <original>W</original>
    <variation>S</variation>
    <location>
        <position position="224"/>
    </location>
</feature>
<feature type="sequence variant" id="VAR_063714" description="In CHED; affects protein processing and transport to the cell surface; dbSNP:rs1298347142." evidence="11 14 17">
    <original>A</original>
    <variation>V</variation>
    <location>
        <position position="253"/>
    </location>
</feature>
<feature type="sequence variant" id="VAR_064423" description="In FECD4; interferes with post-translational processing; the mutant protein localizes to the cytoplasm." evidence="15">
    <original>R</original>
    <variation>P</variation>
    <location>
        <position position="266"/>
    </location>
</feature>
<feature type="sequence variant" id="VAR_047808" description="In dbSNP:rs760889152." evidence="10">
    <original>A</original>
    <variation>V</variation>
    <location>
        <position position="311"/>
    </location>
</feature>
<feature type="sequence variant" id="VAR_063715" description="In CHED; affects protein processing; the mutant protein is retained intracellularly; coexpression with wild-type protein partially rescues the cell surface trafficking of CHED2 mutant." evidence="8 11 16 17 18">
    <original>C</original>
    <variation>R</variation>
    <location>
        <position position="370"/>
    </location>
</feature>
<feature type="sequence variant" id="VAR_064981" description="In CHED; dbSNP:rs780171125." evidence="12 13">
    <original>G</original>
    <variation>R</variation>
    <location>
        <position position="378"/>
    </location>
</feature>
<feature type="sequence variant" id="VAR_047809" description="In FECD4; affects protein processing and transport to the cell surface; the mutant protein is retained intracellularly; coexpression with wild-type protein does not rescue the cell surface trafficking of FECD4 mutant; dbSNP:rs267607065." evidence="10 18 20">
    <original>E</original>
    <variation>K</variation>
    <location>
        <position position="383"/>
    </location>
</feature>
<feature type="sequence variant" id="VAR_064982" description="In CHED." evidence="9">
    <original>T</original>
    <variation>K</variation>
    <location>
        <position position="385"/>
    </location>
</feature>
<feature type="sequence variant" id="VAR_015521" evidence="3">
    <original>Q</original>
    <variation>H</variation>
    <location>
        <position position="392"/>
    </location>
</feature>
<feature type="sequence variant" id="VAR_015522" evidence="3">
    <original>K</original>
    <variation>N</variation>
    <location>
        <position position="393"/>
    </location>
</feature>
<feature type="sequence variant" id="VAR_064983" description="In CHED." evidence="9 12">
    <original>G</original>
    <variation>D</variation>
    <location>
        <position position="402"/>
    </location>
</feature>
<feature type="sequence variant" id="VAR_075538" description="In FECD4; decreases cell surface expression; highly reduces functional activity." evidence="20">
    <original>T</original>
    <variation>I</variation>
    <location>
        <position position="418"/>
    </location>
</feature>
<feature type="sequence variant" id="VAR_030662" description="In CHED; affects protein processing and transport to the cell surface; dbSNP:rs121909389." evidence="5 17">
    <original>G</original>
    <variation>D</variation>
    <location>
        <position position="448"/>
    </location>
</feature>
<feature type="sequence variant" id="VAR_064984" description="In CHED." evidence="9">
    <original>L</original>
    <variation>R</variation>
    <location>
        <position position="457"/>
    </location>
</feature>
<feature type="sequence variant" id="VAR_015523" evidence="3">
    <original>M</original>
    <variation>T</variation>
    <location>
        <position position="467"/>
    </location>
</feature>
<feature type="sequence variant" id="VAR_034947" description="In CDPD; dbSNP:rs121909393." evidence="7">
    <original>R</original>
    <variation>K</variation>
    <location>
        <position position="472"/>
    </location>
</feature>
<feature type="sequence variant" id="VAR_030663" description="In CHED; affects protein processing and transport to the cell surface; dbSNP:rs121909388." evidence="5 9 17">
    <original>S</original>
    <variation>L</variation>
    <location>
        <position position="473"/>
    </location>
</feature>
<feature type="sequence variant" id="VAR_075539" description="In FECD4; slightly decreases cell surface expression; reduces; dbSNP:rs532728316." evidence="20">
    <original>V</original>
    <variation>I</variation>
    <location>
        <position position="491"/>
    </location>
</feature>
<feature type="sequence variant" id="VAR_064424" description="In FECD4; does not interfere with post-translational processing; the mutant protein partially localizes to the cytoplasm; dbSNP:rs150571742." evidence="15">
    <original>Y</original>
    <variation>C</variation>
    <location>
        <position position="510"/>
    </location>
</feature>
<feature type="sequence variant" id="VAR_047810" description="In dbSNP:rs755379986." evidence="10">
    <original>T</original>
    <variation>M</variation>
    <location>
        <position position="545"/>
    </location>
</feature>
<feature type="sequence variant" id="VAR_047811" description="In dbSNP:rs754745672." evidence="10">
    <original>S</original>
    <variation>L</variation>
    <location>
        <position position="549"/>
    </location>
</feature>
<feature type="sequence variant" id="VAR_064425" description="In FECD4; does not interfere with post-translational processing; the mutant protein partially localizes to the cytoplasm; dbSNP:rs144734280." evidence="15">
    <original>V</original>
    <variation>M</variation>
    <location>
        <position position="559"/>
    </location>
</feature>
<feature type="sequence variant" id="VAR_064426" description="In FECD4; interferes with post-translational processing; the mutant protein localizes to the cytoplasm; dbSNP:rs139078082." evidence="15">
    <original>G</original>
    <variation>D</variation>
    <location>
        <position position="567"/>
    </location>
</feature>
<feature type="sequence variant" id="VAR_064985" description="In CHED." evidence="9">
    <original>T</original>
    <variation>K</variation>
    <location>
        <position position="568"/>
    </location>
</feature>
<feature type="sequence variant" id="VAR_074015" description="In CHED; dbSNP:rs749826950." evidence="21">
    <original>E</original>
    <variation>A</variation>
    <location>
        <position position="659"/>
    </location>
</feature>
<feature type="sequence variant" id="VAR_015524" description="In dbSNP:rs1180556979." evidence="3">
    <original>T</original>
    <variation>A</variation>
    <location>
        <position position="692"/>
    </location>
</feature>
<feature type="sequence variant" id="VAR_047812" description="In FECD4; affects protein processing and transport to the cell surface; the mutant protein is retained intracellularly; coexpression with wild-type protein does not rescue the cell surface trafficking of FECD4 mutant; dbSNP:rs267607064." evidence="10 18">
    <original>G</original>
    <variation>E</variation>
    <location>
        <position position="693"/>
    </location>
</feature>
<feature type="sequence variant" id="VAR_064427" description="In FECD4; interferes with post-translational processing; the mutant protein partially localizes to the cytoplasm; dbSNP:rs143965185." evidence="15">
    <original>G</original>
    <variation>R</variation>
    <location>
        <position position="726"/>
    </location>
</feature>
<feature type="sequence variant" id="VAR_047813" description="In FECD4; affects protein processing and transport to the cell surface; the mutant protein is retained intracellularly; coexpression with wild-type protein does not rescue the cell surface trafficking of FECD4 mutant; dbSNP:rs267607066." evidence="10 18">
    <original>T</original>
    <variation>M</variation>
    <location>
        <position position="738"/>
    </location>
</feature>
<feature type="sequence variant" id="VAR_030664" description="In CHED; affects protein processing and transport to the cell surface; the mutant protein is retained intracellularly; coexpression with wild-type protein partially rescues the cell surface trafficking of CHED mutant; dbSNP:rs121909387." evidence="5 6 8 9 17">
    <original>R</original>
    <variation>Q</variation>
    <location>
        <position position="739"/>
    </location>
</feature>
<feature type="sequence variant" id="VAR_063716" description="In CHED; affects protein processing and folding; dbSNP:rs757553189." evidence="8 9 11 17 18">
    <original>R</original>
    <variation>W</variation>
    <location>
        <position position="739"/>
    </location>
</feature>
<feature type="sequence variant" id="VAR_063717" description="In CHED; dbSNP:rs1465111896." evidence="9 11">
    <original>P</original>
    <variation>L</variation>
    <location>
        <position position="757"/>
    </location>
</feature>
<feature type="sequence variant" id="VAR_034948" description="In CHED; dbSNP:rs766567944." evidence="6">
    <original>R</original>
    <variation>H</variation>
    <location>
        <position position="788"/>
    </location>
</feature>
<feature type="sequence variant" id="VAR_034949" description="In CHED; deafness not assessed; dbSNP:rs757244518." evidence="7 9 16">
    <original>V</original>
    <variation>M</variation>
    <location>
        <position position="808"/>
    </location>
</feature>
<feature type="sequence variant" id="VAR_034950" description="In CHED; dbSNP:rs1422526172." evidence="6">
    <original>T</original>
    <variation>M</variation>
    <location>
        <position position="817"/>
    </location>
</feature>
<feature type="sequence variant" id="VAR_064428" description="In FECD4; does not interfere with post-translational processing; the mutant protein partially localizes to the cytoplasm; dbSNP:rs144586846." evidence="15">
    <original>G</original>
    <variation>S</variation>
    <location>
        <position position="818"/>
    </location>
</feature>
<feature type="sequence variant" id="VAR_034951" description="In CDPD; dbSNP:rs121909394." evidence="7">
    <original>L</original>
    <variation>P</variation>
    <location>
        <position position="827"/>
    </location>
</feature>
<feature type="sequence variant" id="VAR_034952" description="In dbSNP:rs34224785.">
    <original>M</original>
    <variation>I</variation>
    <location>
        <position position="832"/>
    </location>
</feature>
<feature type="sequence variant" id="VAR_034953" description="In CDPD; dbSNP:rs121909396." evidence="7">
    <original>M</original>
    <variation>V</variation>
    <location>
        <position position="840"/>
    </location>
</feature>
<feature type="sequence variant" id="VAR_030665" description="In CHED; affects protein processing and transport to the cell surface; dbSNP:rs121909391." evidence="5 8 9 17">
    <original>R</original>
    <variation>C</variation>
    <location>
        <position position="853"/>
    </location>
</feature>
<feature type="sequence variant" id="VAR_034954" description="In CHED; dbSNP:rs121909392." evidence="6">
    <original>R</original>
    <variation>H</variation>
    <location>
        <position position="853"/>
    </location>
</feature>
<feature type="sequence variant" id="VAR_063718" description="In CHED." evidence="11">
    <original>L</original>
    <variation>P</variation>
    <location>
        <position position="857"/>
    </location>
</feature>
<feature type="mutagenesis site" description="Decreases the water flux across the plasma membrane." evidence="19">
    <original>N</original>
    <variation>A</variation>
    <location>
        <position position="623"/>
    </location>
</feature>
<feature type="sequence conflict" description="In Ref. 2; BAC11536." evidence="28" ref="2">
    <original>S</original>
    <variation>P</variation>
    <location>
        <position position="308"/>
    </location>
</feature>
<feature type="sequence conflict" description="In Ref. 2; BAG59341." evidence="28" ref="2">
    <original>L</original>
    <variation>P</variation>
    <location>
        <position position="560"/>
    </location>
</feature>
<feature type="sequence conflict" description="In Ref. 2; BAG59140." evidence="28" ref="2">
    <original>N</original>
    <variation>S</variation>
    <location>
        <position position="668"/>
    </location>
</feature>
<feature type="sequence conflict" description="In Ref. 5; AAI10541." evidence="28" ref="5">
    <original>L</original>
    <variation>R</variation>
    <location>
        <position position="768"/>
    </location>
</feature>
<feature type="sequence conflict" description="In Ref. 2; BAG59341." evidence="28" ref="2">
    <original>G</original>
    <variation>D</variation>
    <location>
        <position position="818"/>
    </location>
</feature>
<feature type="strand" evidence="32">
    <location>
        <begin position="90"/>
        <end position="99"/>
    </location>
</feature>
<feature type="helix" evidence="32">
    <location>
        <begin position="116"/>
        <end position="120"/>
    </location>
</feature>
<feature type="strand" evidence="32">
    <location>
        <begin position="122"/>
        <end position="127"/>
    </location>
</feature>
<feature type="helix" evidence="32">
    <location>
        <begin position="132"/>
        <end position="143"/>
    </location>
</feature>
<feature type="helix" evidence="32">
    <location>
        <begin position="161"/>
        <end position="163"/>
    </location>
</feature>
<feature type="strand" evidence="32">
    <location>
        <begin position="170"/>
        <end position="172"/>
    </location>
</feature>
<feature type="strand" evidence="32">
    <location>
        <begin position="178"/>
        <end position="187"/>
    </location>
</feature>
<feature type="strand" evidence="32">
    <location>
        <begin position="192"/>
        <end position="204"/>
    </location>
</feature>
<feature type="strand" evidence="32">
    <location>
        <begin position="212"/>
        <end position="222"/>
    </location>
</feature>
<feature type="strand" evidence="32">
    <location>
        <begin position="231"/>
        <end position="239"/>
    </location>
</feature>
<feature type="helix" evidence="32">
    <location>
        <begin position="249"/>
        <end position="260"/>
    </location>
</feature>
<feature type="helix" evidence="32">
    <location>
        <begin position="263"/>
        <end position="271"/>
    </location>
</feature>
<feature type="helix" evidence="32">
    <location>
        <begin position="275"/>
        <end position="289"/>
    </location>
</feature>
<feature type="helix" evidence="32">
    <location>
        <begin position="328"/>
        <end position="337"/>
    </location>
</feature>
<feature type="turn" evidence="33">
    <location>
        <begin position="338"/>
        <end position="340"/>
    </location>
</feature>
<feature type="helix" evidence="32">
    <location>
        <begin position="341"/>
        <end position="345"/>
    </location>
</feature>
<feature type="strand" evidence="32">
    <location>
        <begin position="346"/>
        <end position="353"/>
    </location>
</feature>
<feature type="helix" evidence="32">
    <location>
        <begin position="356"/>
        <end position="384"/>
    </location>
</feature>
<feature type="turn" evidence="32">
    <location>
        <begin position="385"/>
        <end position="387"/>
    </location>
</feature>
<feature type="helix" evidence="32">
    <location>
        <begin position="391"/>
        <end position="407"/>
    </location>
</feature>
<feature type="helix" evidence="32">
    <location>
        <begin position="420"/>
        <end position="436"/>
    </location>
</feature>
<feature type="helix" evidence="32">
    <location>
        <begin position="440"/>
        <end position="460"/>
    </location>
</feature>
<feature type="helix" evidence="32">
    <location>
        <begin position="463"/>
        <end position="469"/>
    </location>
</feature>
<feature type="helix" evidence="32">
    <location>
        <begin position="472"/>
        <end position="501"/>
    </location>
</feature>
<feature type="helix" evidence="32">
    <location>
        <begin position="554"/>
        <end position="577"/>
    </location>
</feature>
<feature type="helix" evidence="32">
    <location>
        <begin position="578"/>
        <end position="580"/>
    </location>
</feature>
<feature type="strand" evidence="32">
    <location>
        <begin position="582"/>
        <end position="584"/>
    </location>
</feature>
<feature type="helix" evidence="32">
    <location>
        <begin position="586"/>
        <end position="594"/>
    </location>
</feature>
<feature type="helix" evidence="32">
    <location>
        <begin position="596"/>
        <end position="609"/>
    </location>
</feature>
<feature type="turn" evidence="32">
    <location>
        <begin position="610"/>
        <end position="614"/>
    </location>
</feature>
<feature type="helix" evidence="32">
    <location>
        <begin position="639"/>
        <end position="667"/>
    </location>
</feature>
<feature type="helix" evidence="32">
    <location>
        <begin position="670"/>
        <end position="672"/>
    </location>
</feature>
<feature type="helix" evidence="32">
    <location>
        <begin position="681"/>
        <end position="696"/>
    </location>
</feature>
<feature type="helix" evidence="32">
    <location>
        <begin position="708"/>
        <end position="715"/>
    </location>
</feature>
<feature type="strand" evidence="32">
    <location>
        <begin position="717"/>
        <end position="724"/>
    </location>
</feature>
<feature type="strand" evidence="32">
    <location>
        <begin position="727"/>
        <end position="735"/>
    </location>
</feature>
<feature type="helix" evidence="32">
    <location>
        <begin position="740"/>
        <end position="751"/>
    </location>
</feature>
<feature type="helix" evidence="32">
    <location>
        <begin position="752"/>
        <end position="755"/>
    </location>
</feature>
<feature type="strand" evidence="32">
    <location>
        <begin position="756"/>
        <end position="763"/>
    </location>
</feature>
<feature type="helix" evidence="32">
    <location>
        <begin position="765"/>
        <end position="778"/>
    </location>
</feature>
<feature type="turn" evidence="32">
    <location>
        <begin position="779"/>
        <end position="782"/>
    </location>
</feature>
<feature type="helix" evidence="32">
    <location>
        <begin position="784"/>
        <end position="790"/>
    </location>
</feature>
<feature type="turn" evidence="32">
    <location>
        <begin position="791"/>
        <end position="793"/>
    </location>
</feature>
<feature type="helix" evidence="32">
    <location>
        <begin position="796"/>
        <end position="798"/>
    </location>
</feature>
<feature type="helix" evidence="32">
    <location>
        <begin position="804"/>
        <end position="807"/>
    </location>
</feature>
<feature type="helix" evidence="32">
    <location>
        <begin position="810"/>
        <end position="831"/>
    </location>
</feature>
<feature type="helix" evidence="32">
    <location>
        <begin position="836"/>
        <end position="839"/>
    </location>
</feature>
<feature type="helix" evidence="32">
    <location>
        <begin position="842"/>
        <end position="860"/>
    </location>
</feature>
<feature type="helix" evidence="32">
    <location>
        <begin position="863"/>
        <end position="870"/>
    </location>
</feature>